<gene>
    <name evidence="1" type="primary">petG</name>
    <name type="ordered locus">P9211_11321</name>
</gene>
<comment type="function">
    <text evidence="1">Component of the cytochrome b6-f complex, which mediates electron transfer between photosystem II (PSII) and photosystem I (PSI), cyclic electron flow around PSI, and state transitions. PetG is required for either the stability or assembly of the cytochrome b6-f complex.</text>
</comment>
<comment type="subunit">
    <text evidence="1">The 4 large subunits of the cytochrome b6-f complex are cytochrome b6, subunit IV (17 kDa polypeptide, PetD), cytochrome f and the Rieske protein, while the 4 small subunits are PetG, PetL, PetM and PetN. The complex functions as a dimer.</text>
</comment>
<comment type="subcellular location">
    <subcellularLocation>
        <location evidence="1">Cellular thylakoid membrane</location>
        <topology evidence="1">Single-pass membrane protein</topology>
    </subcellularLocation>
</comment>
<comment type="similarity">
    <text evidence="1">Belongs to the PetG family.</text>
</comment>
<proteinExistence type="inferred from homology"/>
<sequence>MIEPLLCGIVLGLVPITIVGLFVSAWNQYRRESAMPDWE</sequence>
<dbReference type="EMBL" id="CP000878">
    <property type="protein sequence ID" value="ABX09063.1"/>
    <property type="molecule type" value="Genomic_DNA"/>
</dbReference>
<dbReference type="RefSeq" id="WP_012195684.1">
    <property type="nucleotide sequence ID" value="NC_009976.1"/>
</dbReference>
<dbReference type="SMR" id="A9BB51"/>
<dbReference type="STRING" id="93059.P9211_11321"/>
<dbReference type="KEGG" id="pmj:P9211_11321"/>
<dbReference type="HOGENOM" id="CLU_216962_0_0_3"/>
<dbReference type="OrthoDB" id="428448at2"/>
<dbReference type="Proteomes" id="UP000000788">
    <property type="component" value="Chromosome"/>
</dbReference>
<dbReference type="GO" id="GO:0009512">
    <property type="term" value="C:cytochrome b6f complex"/>
    <property type="evidence" value="ECO:0007669"/>
    <property type="project" value="InterPro"/>
</dbReference>
<dbReference type="GO" id="GO:0031676">
    <property type="term" value="C:plasma membrane-derived thylakoid membrane"/>
    <property type="evidence" value="ECO:0007669"/>
    <property type="project" value="UniProtKB-SubCell"/>
</dbReference>
<dbReference type="GO" id="GO:0045158">
    <property type="term" value="F:electron transporter, transferring electrons within cytochrome b6/f complex of photosystem II activity"/>
    <property type="evidence" value="ECO:0007669"/>
    <property type="project" value="UniProtKB-UniRule"/>
</dbReference>
<dbReference type="GO" id="GO:0017004">
    <property type="term" value="P:cytochrome complex assembly"/>
    <property type="evidence" value="ECO:0007669"/>
    <property type="project" value="UniProtKB-UniRule"/>
</dbReference>
<dbReference type="GO" id="GO:0015979">
    <property type="term" value="P:photosynthesis"/>
    <property type="evidence" value="ECO:0007669"/>
    <property type="project" value="UniProtKB-KW"/>
</dbReference>
<dbReference type="HAMAP" id="MF_00432">
    <property type="entry name" value="Cytb6_f_PetG"/>
    <property type="match status" value="1"/>
</dbReference>
<dbReference type="InterPro" id="IPR003683">
    <property type="entry name" value="Cyt_6/f_cplx_su5"/>
</dbReference>
<dbReference type="InterPro" id="IPR036099">
    <property type="entry name" value="Cyt_6/f_cplx_su5_sf"/>
</dbReference>
<dbReference type="NCBIfam" id="NF001907">
    <property type="entry name" value="PRK00665.1"/>
    <property type="match status" value="1"/>
</dbReference>
<dbReference type="Pfam" id="PF02529">
    <property type="entry name" value="PetG"/>
    <property type="match status" value="1"/>
</dbReference>
<dbReference type="PIRSF" id="PIRSF000034">
    <property type="entry name" value="Cyt_b6-f_V"/>
    <property type="match status" value="1"/>
</dbReference>
<dbReference type="SUPFAM" id="SSF103446">
    <property type="entry name" value="PetG subunit of the cytochrome b6f complex"/>
    <property type="match status" value="1"/>
</dbReference>
<reference key="1">
    <citation type="journal article" date="2007" name="PLoS Genet.">
        <title>Patterns and implications of gene gain and loss in the evolution of Prochlorococcus.</title>
        <authorList>
            <person name="Kettler G.C."/>
            <person name="Martiny A.C."/>
            <person name="Huang K."/>
            <person name="Zucker J."/>
            <person name="Coleman M.L."/>
            <person name="Rodrigue S."/>
            <person name="Chen F."/>
            <person name="Lapidus A."/>
            <person name="Ferriera S."/>
            <person name="Johnson J."/>
            <person name="Steglich C."/>
            <person name="Church G.M."/>
            <person name="Richardson P."/>
            <person name="Chisholm S.W."/>
        </authorList>
    </citation>
    <scope>NUCLEOTIDE SEQUENCE [LARGE SCALE GENOMIC DNA]</scope>
    <source>
        <strain>MIT 9211</strain>
    </source>
</reference>
<accession>A9BB51</accession>
<evidence type="ECO:0000255" key="1">
    <source>
        <dbReference type="HAMAP-Rule" id="MF_00432"/>
    </source>
</evidence>
<name>PETG_PROM4</name>
<keyword id="KW-0249">Electron transport</keyword>
<keyword id="KW-0472">Membrane</keyword>
<keyword id="KW-0602">Photosynthesis</keyword>
<keyword id="KW-1185">Reference proteome</keyword>
<keyword id="KW-0793">Thylakoid</keyword>
<keyword id="KW-0812">Transmembrane</keyword>
<keyword id="KW-1133">Transmembrane helix</keyword>
<keyword id="KW-0813">Transport</keyword>
<protein>
    <recommendedName>
        <fullName evidence="1">Cytochrome b6-f complex subunit 5</fullName>
    </recommendedName>
    <alternativeName>
        <fullName evidence="1">Cytochrome b6-f complex subunit PetG</fullName>
    </alternativeName>
    <alternativeName>
        <fullName evidence="1">Cytochrome b6-f complex subunit V</fullName>
    </alternativeName>
</protein>
<organism>
    <name type="scientific">Prochlorococcus marinus (strain MIT 9211)</name>
    <dbReference type="NCBI Taxonomy" id="93059"/>
    <lineage>
        <taxon>Bacteria</taxon>
        <taxon>Bacillati</taxon>
        <taxon>Cyanobacteriota</taxon>
        <taxon>Cyanophyceae</taxon>
        <taxon>Synechococcales</taxon>
        <taxon>Prochlorococcaceae</taxon>
        <taxon>Prochlorococcus</taxon>
    </lineage>
</organism>
<feature type="chain" id="PRO_1000192785" description="Cytochrome b6-f complex subunit 5">
    <location>
        <begin position="1"/>
        <end position="39"/>
    </location>
</feature>
<feature type="transmembrane region" description="Helical" evidence="1">
    <location>
        <begin position="5"/>
        <end position="25"/>
    </location>
</feature>